<dbReference type="EMBL" id="CP000950">
    <property type="protein sequence ID" value="ACA70370.1"/>
    <property type="molecule type" value="Genomic_DNA"/>
</dbReference>
<dbReference type="RefSeq" id="WP_002208953.1">
    <property type="nucleotide sequence ID" value="NZ_CP009792.1"/>
</dbReference>
<dbReference type="SMR" id="B1JQ83"/>
<dbReference type="GeneID" id="96663567"/>
<dbReference type="KEGG" id="ypy:YPK_4111"/>
<dbReference type="PATRIC" id="fig|502800.11.peg.461"/>
<dbReference type="GO" id="GO:0005737">
    <property type="term" value="C:cytoplasm"/>
    <property type="evidence" value="ECO:0007669"/>
    <property type="project" value="UniProtKB-SubCell"/>
</dbReference>
<dbReference type="GO" id="GO:0000917">
    <property type="term" value="P:division septum assembly"/>
    <property type="evidence" value="ECO:0007669"/>
    <property type="project" value="UniProtKB-KW"/>
</dbReference>
<dbReference type="GO" id="GO:0043093">
    <property type="term" value="P:FtsZ-dependent cytokinesis"/>
    <property type="evidence" value="ECO:0007669"/>
    <property type="project" value="UniProtKB-UniRule"/>
</dbReference>
<dbReference type="Gene3D" id="1.20.5.340">
    <property type="match status" value="1"/>
</dbReference>
<dbReference type="HAMAP" id="MF_01196">
    <property type="entry name" value="ZapB"/>
    <property type="match status" value="1"/>
</dbReference>
<dbReference type="InterPro" id="IPR009252">
    <property type="entry name" value="Cell_div_ZapB"/>
</dbReference>
<dbReference type="NCBIfam" id="NF011951">
    <property type="entry name" value="PRK15422.1"/>
    <property type="match status" value="1"/>
</dbReference>
<dbReference type="Pfam" id="PF06005">
    <property type="entry name" value="ZapB"/>
    <property type="match status" value="1"/>
</dbReference>
<evidence type="ECO:0000255" key="1">
    <source>
        <dbReference type="HAMAP-Rule" id="MF_01196"/>
    </source>
</evidence>
<feature type="chain" id="PRO_1000138456" description="Cell division protein ZapB">
    <location>
        <begin position="1"/>
        <end position="79"/>
    </location>
</feature>
<feature type="coiled-coil region" evidence="1">
    <location>
        <begin position="6"/>
        <end position="78"/>
    </location>
</feature>
<sequence>MSFEVFEKLEVKVQQAIDTITLLQMEIEELKEKNNTLTQEVQDAAGSREALVRENEQLKQEQHVWQDRLRALLGKMEEV</sequence>
<accession>B1JQ83</accession>
<comment type="function">
    <text evidence="1">Non-essential, abundant cell division factor that is required for proper Z-ring formation. It is recruited early to the divisome by direct interaction with FtsZ, stimulating Z-ring assembly and thereby promoting cell division earlier in the cell cycle. Its recruitment to the Z-ring requires functional FtsA or ZipA.</text>
</comment>
<comment type="subunit">
    <text evidence="1">Homodimer. The ends of the coiled-coil dimer bind to each other, forming polymers. Interacts with FtsZ.</text>
</comment>
<comment type="subcellular location">
    <subcellularLocation>
        <location evidence="1">Cytoplasm</location>
    </subcellularLocation>
    <text evidence="1">Localizes to the septum at mid-cell, in a FtsZ-like pattern.</text>
</comment>
<comment type="similarity">
    <text evidence="1">Belongs to the ZapB family.</text>
</comment>
<proteinExistence type="inferred from homology"/>
<name>ZAPB_YERPY</name>
<gene>
    <name evidence="1" type="primary">zapB</name>
    <name type="ordered locus">YPK_4111</name>
</gene>
<protein>
    <recommendedName>
        <fullName evidence="1">Cell division protein ZapB</fullName>
    </recommendedName>
</protein>
<keyword id="KW-0131">Cell cycle</keyword>
<keyword id="KW-0132">Cell division</keyword>
<keyword id="KW-0175">Coiled coil</keyword>
<keyword id="KW-0963">Cytoplasm</keyword>
<keyword id="KW-0717">Septation</keyword>
<organism>
    <name type="scientific">Yersinia pseudotuberculosis serotype O:3 (strain YPIII)</name>
    <dbReference type="NCBI Taxonomy" id="502800"/>
    <lineage>
        <taxon>Bacteria</taxon>
        <taxon>Pseudomonadati</taxon>
        <taxon>Pseudomonadota</taxon>
        <taxon>Gammaproteobacteria</taxon>
        <taxon>Enterobacterales</taxon>
        <taxon>Yersiniaceae</taxon>
        <taxon>Yersinia</taxon>
    </lineage>
</organism>
<reference key="1">
    <citation type="submission" date="2008-02" db="EMBL/GenBank/DDBJ databases">
        <title>Complete sequence of Yersinia pseudotuberculosis YPIII.</title>
        <authorList>
            <consortium name="US DOE Joint Genome Institute"/>
            <person name="Copeland A."/>
            <person name="Lucas S."/>
            <person name="Lapidus A."/>
            <person name="Glavina del Rio T."/>
            <person name="Dalin E."/>
            <person name="Tice H."/>
            <person name="Bruce D."/>
            <person name="Goodwin L."/>
            <person name="Pitluck S."/>
            <person name="Munk A.C."/>
            <person name="Brettin T."/>
            <person name="Detter J.C."/>
            <person name="Han C."/>
            <person name="Tapia R."/>
            <person name="Schmutz J."/>
            <person name="Larimer F."/>
            <person name="Land M."/>
            <person name="Hauser L."/>
            <person name="Challacombe J.F."/>
            <person name="Green L."/>
            <person name="Lindler L.E."/>
            <person name="Nikolich M.P."/>
            <person name="Richardson P."/>
        </authorList>
    </citation>
    <scope>NUCLEOTIDE SEQUENCE [LARGE SCALE GENOMIC DNA]</scope>
    <source>
        <strain>YPIII</strain>
    </source>
</reference>